<reference key="1">
    <citation type="journal article" date="2008" name="Cell. Mol. Life Sci.">
        <title>Molecular diversity and evolution of cystine knot toxins of the tarantula Chilobrachys jingzhao.</title>
        <authorList>
            <person name="Chen J."/>
            <person name="Deng M."/>
            <person name="He Q."/>
            <person name="Meng E."/>
            <person name="Jiang L."/>
            <person name="Liao Z."/>
            <person name="Rong M."/>
            <person name="Liang S."/>
        </authorList>
    </citation>
    <scope>NUCLEOTIDE SEQUENCE [LARGE SCALE MRNA]</scope>
    <source>
        <tissue>Venom gland</tissue>
    </source>
</reference>
<reference key="2">
    <citation type="journal article" date="2007" name="Proteomics">
        <title>Proteomic and peptidomic analysis of the venom from Chinese tarantula Chilobrachys jingzhao.</title>
        <authorList>
            <person name="Liao Z."/>
            <person name="Cao J."/>
            <person name="Li S."/>
            <person name="Yan X."/>
            <person name="Hu W."/>
            <person name="He Q."/>
            <person name="Chen J."/>
            <person name="Tang J."/>
            <person name="Xie J."/>
            <person name="Liang S."/>
        </authorList>
    </citation>
    <scope>PROTEIN SEQUENCE OF 30-62</scope>
    <scope>IDENTIFICATION BY MASS SPECTROMETRY</scope>
    <scope>SUBCELLULAR LOCATION</scope>
    <source>
        <tissue>Venom</tissue>
    </source>
</reference>
<reference key="3">
    <citation type="journal article" date="2007" name="Biochem. Biophys. Res. Commun.">
        <title>Effects and mechanism of Chinese tarantula toxins on the Kv2.1 potassium channels.</title>
        <authorList>
            <person name="Yuan C."/>
            <person name="Yang S."/>
            <person name="Liao Z."/>
            <person name="Liang S."/>
        </authorList>
    </citation>
    <scope>FUNCTION</scope>
    <scope>BIOASSAY</scope>
    <source>
        <tissue>Venom</tissue>
    </source>
</reference>
<reference key="4">
    <citation type="journal article" date="2007" name="Toxicon">
        <title>Characterization of the excitatory mechanism induced by Jingzhaotoxin-I inhibiting sodium channel inactivation.</title>
        <authorList>
            <person name="Xiao Y.-C."/>
            <person name="Li J."/>
            <person name="Deng M."/>
            <person name="Dai C.-L."/>
            <person name="Liang S.-P."/>
        </authorList>
    </citation>
    <scope>FUNCTION</scope>
    <source>
        <tissue>Venom</tissue>
    </source>
</reference>
<reference key="5">
    <citation type="journal article" date="2013" name="Toxicon">
        <title>Molecular determinants for the tarantula toxin jingzhaotoxin-I interacting with potassium channel Kv2.1.</title>
        <authorList>
            <person name="Tao H."/>
            <person name="Wu Y."/>
            <person name="Deng M."/>
            <person name="He J."/>
            <person name="Wang M."/>
            <person name="Xiao Y."/>
            <person name="Liang S."/>
        </authorList>
    </citation>
    <scope>FUNCTION</scope>
    <source>
        <tissue>Venom</tissue>
    </source>
</reference>
<reference key="6">
    <citation type="journal article" date="2016" name="Toxicon">
        <title>Molecular determinant for the tarantula toxin Jingzhaotoxin-I slowing the fast inactivation of voltage-gated sodium channels.</title>
        <authorList>
            <person name="Tao H."/>
            <person name="Chen X."/>
            <person name="Lu M."/>
            <person name="Wu Y."/>
            <person name="Deng M."/>
            <person name="Zeng X."/>
            <person name="Liu Z."/>
            <person name="Liang S."/>
        </authorList>
    </citation>
    <scope>FUNCTION</scope>
</reference>
<reference key="7">
    <citation type="journal article" date="2005" name="Acta Biochim. Biophys. Sin.">
        <title>Sequence-specific assignment of 1H-NMR resonance and determination of the secondary structure of Jingzhaotoxin-I.</title>
        <authorList>
            <person name="Zeng X.-Z."/>
            <person name="Zhu Q."/>
            <person name="Liang S.-P."/>
        </authorList>
    </citation>
    <scope>STRUCTURE BY NMR OF 30-62</scope>
    <scope>DISULFIDE BONDS</scope>
    <source>
        <tissue>Venom</tissue>
    </source>
</reference>
<keyword id="KW-0903">Direct protein sequencing</keyword>
<keyword id="KW-1015">Disulfide bond</keyword>
<keyword id="KW-0872">Ion channel impairing toxin</keyword>
<keyword id="KW-0960">Knottin</keyword>
<keyword id="KW-0528">Neurotoxin</keyword>
<keyword id="KW-0629">Postsynaptic neurotoxin</keyword>
<keyword id="KW-0632">Potassium channel impairing toxin</keyword>
<keyword id="KW-0638">Presynaptic neurotoxin</keyword>
<keyword id="KW-0964">Secreted</keyword>
<keyword id="KW-0732">Signal</keyword>
<keyword id="KW-0800">Toxin</keyword>
<keyword id="KW-1220">Voltage-gated potassium channel impairing toxin</keyword>
<keyword id="KW-0738">Voltage-gated sodium channel impairing toxin</keyword>
<comment type="function">
    <text evidence="3 5 6 7">Moderately inhibits voltage-gated sodium channels and weakly inhibits voltage-gated potassium channel (PubMed:17150181, PubMed:17618665, PubMed:23246579, PubMed:26721415). Inhibits the inactivation of rat Nav1.2/SCN2A (IC(50)=870 nM), rat Nav1.3/SCN3A (IC(50)=845 nM), rat Nav1.4/SCN4A (IC(50)=339 nM), human Nav1.5/SCN5A (IC(50)=335 nM) and human Nav1.7/SCN9A sodium channels (IC(50)=348 nM) (PubMed:26721415). The toxin delays the inactivation of sodium channels without affecting the activation and steady-state inactivation kinetics in the physiological range of voltages (PubMed:26721415). Site-directed mutagenesis of the sodium channel indicates that the toxin interacts with site 3 located at the extracellular S3-S4 linker of domain IV (PubMed:26721415). On potassium channels, it inhibits activation of channels with an IC(50) of 8.05 uM through a voltage sensor-trapping mechanism (PubMed:23246579). It increases muscle contraction in several assays (mouse phrenic nerve-diaphragm, toad heart, rat vas deferens) and is suggested to act both presynaptically and postsynaptically (PubMed:17618665).</text>
</comment>
<comment type="subcellular location">
    <subcellularLocation>
        <location evidence="4">Secreted</location>
    </subcellularLocation>
</comment>
<comment type="tissue specificity">
    <text evidence="10">Expressed by the venom gland.</text>
</comment>
<comment type="domain">
    <text evidence="2">The presence of a 'disulfide through disulfide knot' structurally defines this protein as a knottin.</text>
</comment>
<comment type="similarity">
    <text evidence="9">Belongs to the neurotoxin 10 (Hwtx-1) family. 33 (Jztx-1) subfamily.</text>
</comment>
<name>JZT1B_CHIGU</name>
<evidence type="ECO:0000255" key="1"/>
<evidence type="ECO:0000269" key="2">
    <source>
    </source>
</evidence>
<evidence type="ECO:0000269" key="3">
    <source>
    </source>
</evidence>
<evidence type="ECO:0000269" key="4">
    <source>
    </source>
</evidence>
<evidence type="ECO:0000269" key="5">
    <source>
    </source>
</evidence>
<evidence type="ECO:0000269" key="6">
    <source>
    </source>
</evidence>
<evidence type="ECO:0000269" key="7">
    <source>
    </source>
</evidence>
<evidence type="ECO:0000303" key="8">
    <source>
    </source>
</evidence>
<evidence type="ECO:0000305" key="9"/>
<evidence type="ECO:0000305" key="10">
    <source>
    </source>
</evidence>
<evidence type="ECO:0000312" key="11">
    <source>
        <dbReference type="EMBL" id="ABY71667.1"/>
    </source>
</evidence>
<dbReference type="EMBL" id="EU233848">
    <property type="protein sequence ID" value="ABY71667.1"/>
    <property type="molecule type" value="mRNA"/>
</dbReference>
<dbReference type="SMR" id="B1P1B7"/>
<dbReference type="ArachnoServer" id="AS000045">
    <property type="toxin name" value="delta-theraphotoxin-Cg1a"/>
</dbReference>
<dbReference type="GO" id="GO:0005576">
    <property type="term" value="C:extracellular region"/>
    <property type="evidence" value="ECO:0007669"/>
    <property type="project" value="UniProtKB-SubCell"/>
</dbReference>
<dbReference type="GO" id="GO:0035792">
    <property type="term" value="C:host cell postsynaptic membrane"/>
    <property type="evidence" value="ECO:0007669"/>
    <property type="project" value="UniProtKB-KW"/>
</dbReference>
<dbReference type="GO" id="GO:0044231">
    <property type="term" value="C:host cell presynaptic membrane"/>
    <property type="evidence" value="ECO:0007669"/>
    <property type="project" value="UniProtKB-KW"/>
</dbReference>
<dbReference type="GO" id="GO:0008200">
    <property type="term" value="F:ion channel inhibitor activity"/>
    <property type="evidence" value="ECO:0007669"/>
    <property type="project" value="InterPro"/>
</dbReference>
<dbReference type="GO" id="GO:0015459">
    <property type="term" value="F:potassium channel regulator activity"/>
    <property type="evidence" value="ECO:0007669"/>
    <property type="project" value="UniProtKB-KW"/>
</dbReference>
<dbReference type="GO" id="GO:0017080">
    <property type="term" value="F:sodium channel regulator activity"/>
    <property type="evidence" value="ECO:0007669"/>
    <property type="project" value="UniProtKB-KW"/>
</dbReference>
<dbReference type="GO" id="GO:0090729">
    <property type="term" value="F:toxin activity"/>
    <property type="evidence" value="ECO:0007669"/>
    <property type="project" value="UniProtKB-KW"/>
</dbReference>
<dbReference type="InterPro" id="IPR011696">
    <property type="entry name" value="Huwentoxin-1"/>
</dbReference>
<dbReference type="Pfam" id="PF07740">
    <property type="entry name" value="Toxin_12"/>
    <property type="match status" value="1"/>
</dbReference>
<accession>B1P1B7</accession>
<sequence length="62" mass="6894">MKTSILFVIFSLALLFALSAATEIEETDRACGQFWWKCGEGKPPCCANFACKIGLYLCIWSP</sequence>
<proteinExistence type="evidence at protein level"/>
<organism>
    <name type="scientific">Chilobrachys guangxiensis</name>
    <name type="common">Chinese earth tiger tarantula</name>
    <name type="synonym">Chilobrachys jingzhao</name>
    <dbReference type="NCBI Taxonomy" id="278060"/>
    <lineage>
        <taxon>Eukaryota</taxon>
        <taxon>Metazoa</taxon>
        <taxon>Ecdysozoa</taxon>
        <taxon>Arthropoda</taxon>
        <taxon>Chelicerata</taxon>
        <taxon>Arachnida</taxon>
        <taxon>Araneae</taxon>
        <taxon>Mygalomorphae</taxon>
        <taxon>Theraphosidae</taxon>
        <taxon>Chilobrachys</taxon>
    </lineage>
</organism>
<protein>
    <recommendedName>
        <fullName evidence="9">Delta-theraphotoxin-Cg1a 2</fullName>
        <shortName evidence="9">Delta-TRTX-Cg1a</shortName>
    </recommendedName>
    <alternativeName>
        <fullName evidence="9">Jingzhaotoxin-1.2</fullName>
        <shortName evidence="9">JZTX-1.2</shortName>
    </alternativeName>
    <alternativeName>
        <fullName evidence="9">Jingzhaotoxin-I.2</fullName>
        <shortName evidence="11">JZTX-I.2</shortName>
    </alternativeName>
    <alternativeName>
        <fullName evidence="8">Peptide F5-24.92</fullName>
    </alternativeName>
</protein>
<feature type="signal peptide" evidence="1">
    <location>
        <begin position="1"/>
        <end position="21"/>
    </location>
</feature>
<feature type="propeptide" id="PRO_0000398388" evidence="4">
    <location>
        <begin position="22"/>
        <end position="29"/>
    </location>
</feature>
<feature type="peptide" id="PRO_0000398389" description="Delta-theraphotoxin-Cg1a 2" evidence="4">
    <location>
        <begin position="30"/>
        <end position="62"/>
    </location>
</feature>
<feature type="disulfide bond" evidence="2">
    <location>
        <begin position="31"/>
        <end position="46"/>
    </location>
</feature>
<feature type="disulfide bond" evidence="2">
    <location>
        <begin position="38"/>
        <end position="51"/>
    </location>
</feature>
<feature type="disulfide bond" evidence="2">
    <location>
        <begin position="45"/>
        <end position="58"/>
    </location>
</feature>